<protein>
    <recommendedName>
        <fullName evidence="1">RNA-binding protein Hfq</fullName>
    </recommendedName>
</protein>
<keyword id="KW-0694">RNA-binding</keyword>
<keyword id="KW-0346">Stress response</keyword>
<feature type="chain" id="PRO_1000025890" description="RNA-binding protein Hfq">
    <location>
        <begin position="1"/>
        <end position="74"/>
    </location>
</feature>
<feature type="domain" description="Sm" evidence="2">
    <location>
        <begin position="9"/>
        <end position="69"/>
    </location>
</feature>
<reference key="1">
    <citation type="journal article" date="2007" name="J. Bacteriol.">
        <title>The complete genome sequence of Bacillus thuringiensis Al Hakam.</title>
        <authorList>
            <person name="Challacombe J.F."/>
            <person name="Altherr M.R."/>
            <person name="Xie G."/>
            <person name="Bhotika S.S."/>
            <person name="Brown N."/>
            <person name="Bruce D."/>
            <person name="Campbell C.S."/>
            <person name="Campbell M.L."/>
            <person name="Chen J."/>
            <person name="Chertkov O."/>
            <person name="Cleland C."/>
            <person name="Dimitrijevic M."/>
            <person name="Doggett N.A."/>
            <person name="Fawcett J.J."/>
            <person name="Glavina T."/>
            <person name="Goodwin L.A."/>
            <person name="Green L.D."/>
            <person name="Han C.S."/>
            <person name="Hill K.K."/>
            <person name="Hitchcock P."/>
            <person name="Jackson P.J."/>
            <person name="Keim P."/>
            <person name="Kewalramani A.R."/>
            <person name="Longmire J."/>
            <person name="Lucas S."/>
            <person name="Malfatti S."/>
            <person name="Martinez D."/>
            <person name="McMurry K."/>
            <person name="Meincke L.J."/>
            <person name="Misra M."/>
            <person name="Moseman B.L."/>
            <person name="Mundt M."/>
            <person name="Munk A.C."/>
            <person name="Okinaka R.T."/>
            <person name="Parson-Quintana B."/>
            <person name="Reilly L.P."/>
            <person name="Richardson P."/>
            <person name="Robinson D.L."/>
            <person name="Saunders E."/>
            <person name="Tapia R."/>
            <person name="Tesmer J.G."/>
            <person name="Thayer N."/>
            <person name="Thompson L.S."/>
            <person name="Tice H."/>
            <person name="Ticknor L.O."/>
            <person name="Wills P.L."/>
            <person name="Gilna P."/>
            <person name="Brettin T.S."/>
        </authorList>
    </citation>
    <scope>NUCLEOTIDE SEQUENCE [LARGE SCALE GENOMIC DNA]</scope>
    <source>
        <strain>Al Hakam</strain>
    </source>
</reference>
<comment type="function">
    <text evidence="1">RNA chaperone that binds small regulatory RNA (sRNAs) and mRNAs to facilitate mRNA translational regulation in response to envelope stress, environmental stress and changes in metabolite concentrations. Also binds with high specificity to tRNAs.</text>
</comment>
<comment type="subunit">
    <text evidence="1">Homohexamer.</text>
</comment>
<comment type="similarity">
    <text evidence="1">Belongs to the Hfq family.</text>
</comment>
<sequence>MKQSINIQDQFLNQLRKENTFVTLYLLNGFQLRGLIKGFDNFTVLLETEGKQQLIYKHAISTFVPQKNVSIELE</sequence>
<accession>A0RH87</accession>
<name>HFQ_BACAH</name>
<organism>
    <name type="scientific">Bacillus thuringiensis (strain Al Hakam)</name>
    <dbReference type="NCBI Taxonomy" id="412694"/>
    <lineage>
        <taxon>Bacteria</taxon>
        <taxon>Bacillati</taxon>
        <taxon>Bacillota</taxon>
        <taxon>Bacilli</taxon>
        <taxon>Bacillales</taxon>
        <taxon>Bacillaceae</taxon>
        <taxon>Bacillus</taxon>
        <taxon>Bacillus cereus group</taxon>
    </lineage>
</organism>
<evidence type="ECO:0000255" key="1">
    <source>
        <dbReference type="HAMAP-Rule" id="MF_00436"/>
    </source>
</evidence>
<evidence type="ECO:0000255" key="2">
    <source>
        <dbReference type="PROSITE-ProRule" id="PRU01346"/>
    </source>
</evidence>
<proteinExistence type="inferred from homology"/>
<gene>
    <name evidence="1" type="primary">hfq</name>
    <name type="ordered locus">BALH_3340</name>
</gene>
<dbReference type="EMBL" id="CP000485">
    <property type="protein sequence ID" value="ABK86580.1"/>
    <property type="molecule type" value="Genomic_DNA"/>
</dbReference>
<dbReference type="RefSeq" id="WP_000813896.1">
    <property type="nucleotide sequence ID" value="NC_008600.1"/>
</dbReference>
<dbReference type="SMR" id="A0RH87"/>
<dbReference type="GeneID" id="93007416"/>
<dbReference type="KEGG" id="btl:BALH_3340"/>
<dbReference type="HOGENOM" id="CLU_113688_3_0_9"/>
<dbReference type="GO" id="GO:0005829">
    <property type="term" value="C:cytosol"/>
    <property type="evidence" value="ECO:0007669"/>
    <property type="project" value="TreeGrafter"/>
</dbReference>
<dbReference type="GO" id="GO:0003723">
    <property type="term" value="F:RNA binding"/>
    <property type="evidence" value="ECO:0007669"/>
    <property type="project" value="UniProtKB-UniRule"/>
</dbReference>
<dbReference type="GO" id="GO:0006355">
    <property type="term" value="P:regulation of DNA-templated transcription"/>
    <property type="evidence" value="ECO:0007669"/>
    <property type="project" value="InterPro"/>
</dbReference>
<dbReference type="GO" id="GO:0043487">
    <property type="term" value="P:regulation of RNA stability"/>
    <property type="evidence" value="ECO:0007669"/>
    <property type="project" value="TreeGrafter"/>
</dbReference>
<dbReference type="GO" id="GO:0045974">
    <property type="term" value="P:regulation of translation, ncRNA-mediated"/>
    <property type="evidence" value="ECO:0007669"/>
    <property type="project" value="TreeGrafter"/>
</dbReference>
<dbReference type="CDD" id="cd01716">
    <property type="entry name" value="Hfq"/>
    <property type="match status" value="1"/>
</dbReference>
<dbReference type="FunFam" id="2.30.30.100:FF:000012">
    <property type="entry name" value="RNA-binding protein Hfq"/>
    <property type="match status" value="1"/>
</dbReference>
<dbReference type="Gene3D" id="2.30.30.100">
    <property type="match status" value="1"/>
</dbReference>
<dbReference type="HAMAP" id="MF_00436">
    <property type="entry name" value="Hfq"/>
    <property type="match status" value="1"/>
</dbReference>
<dbReference type="InterPro" id="IPR005001">
    <property type="entry name" value="Hfq"/>
</dbReference>
<dbReference type="InterPro" id="IPR010920">
    <property type="entry name" value="LSM_dom_sf"/>
</dbReference>
<dbReference type="InterPro" id="IPR047575">
    <property type="entry name" value="Sm"/>
</dbReference>
<dbReference type="NCBIfam" id="TIGR02383">
    <property type="entry name" value="Hfq"/>
    <property type="match status" value="1"/>
</dbReference>
<dbReference type="NCBIfam" id="NF001602">
    <property type="entry name" value="PRK00395.1"/>
    <property type="match status" value="1"/>
</dbReference>
<dbReference type="PANTHER" id="PTHR34772">
    <property type="entry name" value="RNA-BINDING PROTEIN HFQ"/>
    <property type="match status" value="1"/>
</dbReference>
<dbReference type="PANTHER" id="PTHR34772:SF1">
    <property type="entry name" value="RNA-BINDING PROTEIN HFQ"/>
    <property type="match status" value="1"/>
</dbReference>
<dbReference type="Pfam" id="PF17209">
    <property type="entry name" value="Hfq"/>
    <property type="match status" value="1"/>
</dbReference>
<dbReference type="SUPFAM" id="SSF50182">
    <property type="entry name" value="Sm-like ribonucleoproteins"/>
    <property type="match status" value="1"/>
</dbReference>
<dbReference type="PROSITE" id="PS52002">
    <property type="entry name" value="SM"/>
    <property type="match status" value="1"/>
</dbReference>